<gene>
    <name type="primary">RAB5B</name>
    <name type="ORF">RCJMB04_32j11</name>
</gene>
<organism>
    <name type="scientific">Gallus gallus</name>
    <name type="common">Chicken</name>
    <dbReference type="NCBI Taxonomy" id="9031"/>
    <lineage>
        <taxon>Eukaryota</taxon>
        <taxon>Metazoa</taxon>
        <taxon>Chordata</taxon>
        <taxon>Craniata</taxon>
        <taxon>Vertebrata</taxon>
        <taxon>Euteleostomi</taxon>
        <taxon>Archelosauria</taxon>
        <taxon>Archosauria</taxon>
        <taxon>Dinosauria</taxon>
        <taxon>Saurischia</taxon>
        <taxon>Theropoda</taxon>
        <taxon>Coelurosauria</taxon>
        <taxon>Aves</taxon>
        <taxon>Neognathae</taxon>
        <taxon>Galloanserae</taxon>
        <taxon>Galliformes</taxon>
        <taxon>Phasianidae</taxon>
        <taxon>Phasianinae</taxon>
        <taxon>Gallus</taxon>
    </lineage>
</organism>
<name>RAB5B_CHICK</name>
<proteinExistence type="evidence at transcript level"/>
<accession>Q5ZHW4</accession>
<feature type="chain" id="PRO_0000260744" description="Ras-related protein Rab-5B">
    <location>
        <begin position="1"/>
        <end position="215"/>
    </location>
</feature>
<feature type="region of interest" description="Disordered" evidence="3">
    <location>
        <begin position="184"/>
        <end position="215"/>
    </location>
</feature>
<feature type="short sequence motif" description="Switch 1" evidence="1">
    <location>
        <begin position="44"/>
        <end position="56"/>
    </location>
</feature>
<feature type="short sequence motif" description="Switch 2" evidence="1">
    <location>
        <begin position="77"/>
        <end position="93"/>
    </location>
</feature>
<feature type="compositionally biased region" description="Polar residues" evidence="3">
    <location>
        <begin position="204"/>
        <end position="215"/>
    </location>
</feature>
<feature type="binding site" evidence="1">
    <location>
        <position position="29"/>
    </location>
    <ligand>
        <name>GTP</name>
        <dbReference type="ChEBI" id="CHEBI:37565"/>
    </ligand>
</feature>
<feature type="binding site" evidence="1">
    <location>
        <position position="30"/>
    </location>
    <ligand>
        <name>GTP</name>
        <dbReference type="ChEBI" id="CHEBI:37565"/>
    </ligand>
</feature>
<feature type="binding site" evidence="1">
    <location>
        <position position="32"/>
    </location>
    <ligand>
        <name>GTP</name>
        <dbReference type="ChEBI" id="CHEBI:37565"/>
    </ligand>
</feature>
<feature type="binding site" evidence="1">
    <location>
        <position position="33"/>
    </location>
    <ligand>
        <name>GTP</name>
        <dbReference type="ChEBI" id="CHEBI:37565"/>
    </ligand>
</feature>
<feature type="binding site" evidence="1">
    <location>
        <position position="34"/>
    </location>
    <ligand>
        <name>GTP</name>
        <dbReference type="ChEBI" id="CHEBI:37565"/>
    </ligand>
</feature>
<feature type="binding site" evidence="1">
    <location>
        <position position="34"/>
    </location>
    <ligand>
        <name>Mg(2+)</name>
        <dbReference type="ChEBI" id="CHEBI:18420"/>
    </ligand>
</feature>
<feature type="binding site" evidence="1">
    <location>
        <position position="35"/>
    </location>
    <ligand>
        <name>GTP</name>
        <dbReference type="ChEBI" id="CHEBI:37565"/>
    </ligand>
</feature>
<feature type="binding site" evidence="1">
    <location>
        <position position="46"/>
    </location>
    <ligand>
        <name>GTP</name>
        <dbReference type="ChEBI" id="CHEBI:37565"/>
    </ligand>
</feature>
<feature type="binding site" evidence="1">
    <location>
        <position position="47"/>
    </location>
    <ligand>
        <name>GTP</name>
        <dbReference type="ChEBI" id="CHEBI:37565"/>
    </ligand>
</feature>
<feature type="binding site" evidence="1">
    <location>
        <position position="52"/>
    </location>
    <ligand>
        <name>GTP</name>
        <dbReference type="ChEBI" id="CHEBI:37565"/>
    </ligand>
</feature>
<feature type="binding site" evidence="1">
    <location>
        <position position="52"/>
    </location>
    <ligand>
        <name>Mg(2+)</name>
        <dbReference type="ChEBI" id="CHEBI:18420"/>
    </ligand>
</feature>
<feature type="binding site" evidence="1">
    <location>
        <position position="78"/>
    </location>
    <ligand>
        <name>GTP</name>
        <dbReference type="ChEBI" id="CHEBI:37565"/>
    </ligand>
</feature>
<feature type="binding site" evidence="1">
    <location>
        <position position="133"/>
    </location>
    <ligand>
        <name>GTP</name>
        <dbReference type="ChEBI" id="CHEBI:37565"/>
    </ligand>
</feature>
<feature type="binding site" evidence="1">
    <location>
        <position position="134"/>
    </location>
    <ligand>
        <name>GTP</name>
        <dbReference type="ChEBI" id="CHEBI:37565"/>
    </ligand>
</feature>
<feature type="binding site" evidence="1">
    <location>
        <position position="136"/>
    </location>
    <ligand>
        <name>GTP</name>
        <dbReference type="ChEBI" id="CHEBI:37565"/>
    </ligand>
</feature>
<feature type="binding site" evidence="1">
    <location>
        <position position="164"/>
    </location>
    <ligand>
        <name>GTP</name>
        <dbReference type="ChEBI" id="CHEBI:37565"/>
    </ligand>
</feature>
<feature type="binding site" evidence="1">
    <location>
        <position position="165"/>
    </location>
    <ligand>
        <name>GTP</name>
        <dbReference type="ChEBI" id="CHEBI:37565"/>
    </ligand>
</feature>
<feature type="lipid moiety-binding region" description="S-geranylgeranyl cysteine" evidence="1">
    <location>
        <position position="212"/>
    </location>
</feature>
<feature type="lipid moiety-binding region" description="S-geranylgeranyl cysteine" evidence="1">
    <location>
        <position position="213"/>
    </location>
</feature>
<reference key="1">
    <citation type="journal article" date="2005" name="Genome Biol.">
        <title>Full-length cDNAs from chicken bursal lymphocytes to facilitate gene function analysis.</title>
        <authorList>
            <person name="Caldwell R.B."/>
            <person name="Kierzek A.M."/>
            <person name="Arakawa H."/>
            <person name="Bezzubov Y."/>
            <person name="Zaim J."/>
            <person name="Fiedler P."/>
            <person name="Kutter S."/>
            <person name="Blagodatski A."/>
            <person name="Kostovska D."/>
            <person name="Koter M."/>
            <person name="Plachy J."/>
            <person name="Carninci P."/>
            <person name="Hayashizaki Y."/>
            <person name="Buerstedde J.-M."/>
        </authorList>
    </citation>
    <scope>NUCLEOTIDE SEQUENCE [LARGE SCALE MRNA]</scope>
    <source>
        <strain>CB</strain>
        <tissue>Bursa of Fabricius</tissue>
    </source>
</reference>
<keyword id="KW-1003">Cell membrane</keyword>
<keyword id="KW-0967">Endosome</keyword>
<keyword id="KW-0342">GTP-binding</keyword>
<keyword id="KW-0378">Hydrolase</keyword>
<keyword id="KW-0449">Lipoprotein</keyword>
<keyword id="KW-0460">Magnesium</keyword>
<keyword id="KW-0472">Membrane</keyword>
<keyword id="KW-0479">Metal-binding</keyword>
<keyword id="KW-0547">Nucleotide-binding</keyword>
<keyword id="KW-0636">Prenylation</keyword>
<keyword id="KW-0653">Protein transport</keyword>
<keyword id="KW-1185">Reference proteome</keyword>
<keyword id="KW-0813">Transport</keyword>
<protein>
    <recommendedName>
        <fullName>Ras-related protein Rab-5B</fullName>
        <ecNumber evidence="1">3.6.5.2</ecNumber>
    </recommendedName>
</protein>
<comment type="function">
    <text evidence="1">The small GTPases Rab are key regulators of intracellular membrane trafficking, from the formation of transport vesicles to their fusion with membranes. Rabs cycle between an inactive GDP-bound form and an active GTP-bound form that is able to recruit to membranes different sets of downstream effectors directly responsible for vesicle formation, movement, tethering and fusion.</text>
</comment>
<comment type="catalytic activity">
    <reaction evidence="1">
        <text>GTP + H2O = GDP + phosphate + H(+)</text>
        <dbReference type="Rhea" id="RHEA:19669"/>
        <dbReference type="ChEBI" id="CHEBI:15377"/>
        <dbReference type="ChEBI" id="CHEBI:15378"/>
        <dbReference type="ChEBI" id="CHEBI:37565"/>
        <dbReference type="ChEBI" id="CHEBI:43474"/>
        <dbReference type="ChEBI" id="CHEBI:58189"/>
        <dbReference type="EC" id="3.6.5.2"/>
    </reaction>
    <physiologicalReaction direction="left-to-right" evidence="1">
        <dbReference type="Rhea" id="RHEA:19670"/>
    </physiologicalReaction>
</comment>
<comment type="cofactor">
    <cofactor evidence="1">
        <name>Mg(2+)</name>
        <dbReference type="ChEBI" id="CHEBI:18420"/>
    </cofactor>
</comment>
<comment type="activity regulation">
    <text evidence="4">Regulated by guanine nucleotide exchange factors (GEFs) which promote the exchange of bound GDP for free GTP (Probable). Regulated by GTPase activating proteins (GAPs) which increase the GTP hydrolysis activity (Probable). Inhibited by GDP dissociation inhibitors (GDIs) (Probable).</text>
</comment>
<comment type="subcellular location">
    <subcellularLocation>
        <location evidence="2">Cell membrane</location>
        <topology evidence="2">Lipid-anchor</topology>
        <orientation evidence="2">Cytoplasmic side</orientation>
    </subcellularLocation>
    <subcellularLocation>
        <location evidence="2">Early endosome membrane</location>
        <topology evidence="2">Lipid-anchor</topology>
    </subcellularLocation>
</comment>
<comment type="domain">
    <text evidence="1">Switch 1, switch 2 and the interswitch regions are characteristic of Rab GTPases and mediate the interactions with Rab downstream effectors. The switch regions undergo conformational changes upon nucleotide binding which drive interaction with specific sets of effector proteins, with most effectors only binding to GTP-bound Rab.</text>
</comment>
<comment type="similarity">
    <text evidence="4">Belongs to the small GTPase superfamily. Rab family.</text>
</comment>
<evidence type="ECO:0000250" key="1">
    <source>
        <dbReference type="UniProtKB" id="P20339"/>
    </source>
</evidence>
<evidence type="ECO:0000250" key="2">
    <source>
        <dbReference type="UniProtKB" id="P61020"/>
    </source>
</evidence>
<evidence type="ECO:0000256" key="3">
    <source>
        <dbReference type="SAM" id="MobiDB-lite"/>
    </source>
</evidence>
<evidence type="ECO:0000305" key="4"/>
<sequence length="215" mass="23615">MTSRGAARPNGQSQASKICQFKLVLLGESAVGKSSLVLRFVKGQFHEYQESTIGAAFLTQSVCLDDTTVKFEIWDTAGQERYHSLAPMYYRGAQAAIVVYDITNQETFARAKTWVKELQRQASPSIVIALAGNKADLASKRMVEYEEAQAYADDNSLLFMETSAKTAMNVNDLFLAIAKKLPKSEPQSTSGAAGRSRGVDLHEQTQQNKSQCCSN</sequence>
<dbReference type="EC" id="3.6.5.2" evidence="1"/>
<dbReference type="EMBL" id="AJ721020">
    <property type="protein sequence ID" value="CAG32679.1"/>
    <property type="molecule type" value="mRNA"/>
</dbReference>
<dbReference type="RefSeq" id="NP_001186777.1">
    <property type="nucleotide sequence ID" value="NM_001199848.2"/>
</dbReference>
<dbReference type="RefSeq" id="XP_040510650.1">
    <property type="nucleotide sequence ID" value="XM_040654716.2"/>
</dbReference>
<dbReference type="RefSeq" id="XP_046760887.1">
    <property type="nucleotide sequence ID" value="XM_046904931.1"/>
</dbReference>
<dbReference type="RefSeq" id="XP_046790109.1">
    <property type="nucleotide sequence ID" value="XM_046934153.1"/>
</dbReference>
<dbReference type="RefSeq" id="XP_046790110.1">
    <property type="nucleotide sequence ID" value="XM_046934154.1"/>
</dbReference>
<dbReference type="SMR" id="Q5ZHW4"/>
<dbReference type="FunCoup" id="Q5ZHW4">
    <property type="interactions" value="3035"/>
</dbReference>
<dbReference type="STRING" id="9031.ENSGALP00000056524"/>
<dbReference type="PaxDb" id="9031-ENSGALP00000041857"/>
<dbReference type="Ensembl" id="ENSGALT00010060494.1">
    <property type="protein sequence ID" value="ENSGALP00010037253.1"/>
    <property type="gene ID" value="ENSGALG00010024778.1"/>
</dbReference>
<dbReference type="GeneID" id="100529061"/>
<dbReference type="KEGG" id="gga:100529061"/>
<dbReference type="CTD" id="5869"/>
<dbReference type="VEuPathDB" id="HostDB:geneid_100529061"/>
<dbReference type="eggNOG" id="KOG0092">
    <property type="taxonomic scope" value="Eukaryota"/>
</dbReference>
<dbReference type="GeneTree" id="ENSGT00940000160756"/>
<dbReference type="InParanoid" id="Q5ZHW4"/>
<dbReference type="OMA" id="DEEGLMW"/>
<dbReference type="OrthoDB" id="63533at2759"/>
<dbReference type="PhylomeDB" id="Q5ZHW4"/>
<dbReference type="Reactome" id="R-GGA-6798695">
    <property type="pathway name" value="Neutrophil degranulation"/>
</dbReference>
<dbReference type="Reactome" id="R-GGA-8854214">
    <property type="pathway name" value="TBC/RABGAPs"/>
</dbReference>
<dbReference type="Reactome" id="R-GGA-8856828">
    <property type="pathway name" value="Clathrin-mediated endocytosis"/>
</dbReference>
<dbReference type="Reactome" id="R-GGA-8876198">
    <property type="pathway name" value="RAB GEFs exchange GTP for GDP on RABs"/>
</dbReference>
<dbReference type="PRO" id="PR:Q5ZHW4"/>
<dbReference type="Proteomes" id="UP000000539">
    <property type="component" value="Chromosome 34"/>
</dbReference>
<dbReference type="Bgee" id="ENSGALG00000042482">
    <property type="expression patterns" value="Expressed in skeletal muscle tissue and 12 other cell types or tissues"/>
</dbReference>
<dbReference type="GO" id="GO:0005769">
    <property type="term" value="C:early endosome"/>
    <property type="evidence" value="ECO:0000318"/>
    <property type="project" value="GO_Central"/>
</dbReference>
<dbReference type="GO" id="GO:0031901">
    <property type="term" value="C:early endosome membrane"/>
    <property type="evidence" value="ECO:0007669"/>
    <property type="project" value="UniProtKB-SubCell"/>
</dbReference>
<dbReference type="GO" id="GO:0030139">
    <property type="term" value="C:endocytic vesicle"/>
    <property type="evidence" value="ECO:0000318"/>
    <property type="project" value="GO_Central"/>
</dbReference>
<dbReference type="GO" id="GO:0012505">
    <property type="term" value="C:endomembrane system"/>
    <property type="evidence" value="ECO:0000318"/>
    <property type="project" value="GO_Central"/>
</dbReference>
<dbReference type="GO" id="GO:0005886">
    <property type="term" value="C:plasma membrane"/>
    <property type="evidence" value="ECO:0000318"/>
    <property type="project" value="GO_Central"/>
</dbReference>
<dbReference type="GO" id="GO:0003925">
    <property type="term" value="F:G protein activity"/>
    <property type="evidence" value="ECO:0007669"/>
    <property type="project" value="UniProtKB-EC"/>
</dbReference>
<dbReference type="GO" id="GO:0019003">
    <property type="term" value="F:GDP binding"/>
    <property type="evidence" value="ECO:0000250"/>
    <property type="project" value="UniProtKB"/>
</dbReference>
<dbReference type="GO" id="GO:0005525">
    <property type="term" value="F:GTP binding"/>
    <property type="evidence" value="ECO:0007669"/>
    <property type="project" value="UniProtKB-KW"/>
</dbReference>
<dbReference type="GO" id="GO:0003924">
    <property type="term" value="F:GTPase activity"/>
    <property type="evidence" value="ECO:0000318"/>
    <property type="project" value="GO_Central"/>
</dbReference>
<dbReference type="GO" id="GO:0006897">
    <property type="term" value="P:endocytosis"/>
    <property type="evidence" value="ECO:0000318"/>
    <property type="project" value="GO_Central"/>
</dbReference>
<dbReference type="GO" id="GO:0006886">
    <property type="term" value="P:intracellular protein transport"/>
    <property type="evidence" value="ECO:0000318"/>
    <property type="project" value="GO_Central"/>
</dbReference>
<dbReference type="CDD" id="cd01860">
    <property type="entry name" value="Rab5_related"/>
    <property type="match status" value="1"/>
</dbReference>
<dbReference type="FunFam" id="3.40.50.300:FF:000180">
    <property type="entry name" value="Member RAS oncogene family"/>
    <property type="match status" value="1"/>
</dbReference>
<dbReference type="Gene3D" id="3.40.50.300">
    <property type="entry name" value="P-loop containing nucleotide triphosphate hydrolases"/>
    <property type="match status" value="1"/>
</dbReference>
<dbReference type="InterPro" id="IPR027417">
    <property type="entry name" value="P-loop_NTPase"/>
</dbReference>
<dbReference type="InterPro" id="IPR005225">
    <property type="entry name" value="Small_GTP-bd"/>
</dbReference>
<dbReference type="InterPro" id="IPR001806">
    <property type="entry name" value="Small_GTPase"/>
</dbReference>
<dbReference type="NCBIfam" id="TIGR00231">
    <property type="entry name" value="small_GTP"/>
    <property type="match status" value="1"/>
</dbReference>
<dbReference type="PANTHER" id="PTHR47978">
    <property type="match status" value="1"/>
</dbReference>
<dbReference type="Pfam" id="PF00071">
    <property type="entry name" value="Ras"/>
    <property type="match status" value="1"/>
</dbReference>
<dbReference type="PRINTS" id="PR00449">
    <property type="entry name" value="RASTRNSFRMNG"/>
</dbReference>
<dbReference type="SMART" id="SM00175">
    <property type="entry name" value="RAB"/>
    <property type="match status" value="1"/>
</dbReference>
<dbReference type="SMART" id="SM00176">
    <property type="entry name" value="RAN"/>
    <property type="match status" value="1"/>
</dbReference>
<dbReference type="SMART" id="SM00173">
    <property type="entry name" value="RAS"/>
    <property type="match status" value="1"/>
</dbReference>
<dbReference type="SMART" id="SM00174">
    <property type="entry name" value="RHO"/>
    <property type="match status" value="1"/>
</dbReference>
<dbReference type="SUPFAM" id="SSF52540">
    <property type="entry name" value="P-loop containing nucleoside triphosphate hydrolases"/>
    <property type="match status" value="1"/>
</dbReference>
<dbReference type="PROSITE" id="PS51419">
    <property type="entry name" value="RAB"/>
    <property type="match status" value="1"/>
</dbReference>